<sequence>MDARAINSREKADLKYPRNTYIIGDVQGCYRELQELLELIQFDSTKDRLGFVGDLVNRGPNSLEVLRFLKSLSSPLIVLGNHDLYLLILGYGLMPEDSYEHTLHAVLQAPDKLELLEWLRHSPLIRYEKSLSAVLVHAGLPPQWNIKESILHAEEISTALKGPHYLAFLKNLFGNEPSQWKEDLEGQDRLRYICNAFTRMRFCDAKGHLDLESEGKTNQAPSRFRPWFEWRNPQEDNVDIVFGHWAALNGQSSAPHTHALDTGCAWGYKLTAINLKTKERFSVPCQSALRM</sequence>
<comment type="function">
    <text evidence="1">Hydrolyzes diadenosine 5',5'''-P1,P4-tetraphosphate to yield ADP.</text>
</comment>
<comment type="catalytic activity">
    <reaction evidence="1">
        <text>P(1),P(4)-bis(5'-adenosyl) tetraphosphate + H2O = 2 ADP + 2 H(+)</text>
        <dbReference type="Rhea" id="RHEA:24252"/>
        <dbReference type="ChEBI" id="CHEBI:15377"/>
        <dbReference type="ChEBI" id="CHEBI:15378"/>
        <dbReference type="ChEBI" id="CHEBI:58141"/>
        <dbReference type="ChEBI" id="CHEBI:456216"/>
        <dbReference type="EC" id="3.6.1.41"/>
    </reaction>
</comment>
<comment type="similarity">
    <text evidence="1">Belongs to the Ap4A hydrolase family.</text>
</comment>
<organism>
    <name type="scientific">Coxiella burnetii (strain RSA 493 / Nine Mile phase I)</name>
    <dbReference type="NCBI Taxonomy" id="227377"/>
    <lineage>
        <taxon>Bacteria</taxon>
        <taxon>Pseudomonadati</taxon>
        <taxon>Pseudomonadota</taxon>
        <taxon>Gammaproteobacteria</taxon>
        <taxon>Legionellales</taxon>
        <taxon>Coxiellaceae</taxon>
        <taxon>Coxiella</taxon>
    </lineage>
</organism>
<keyword id="KW-0378">Hydrolase</keyword>
<keyword id="KW-1185">Reference proteome</keyword>
<dbReference type="EC" id="3.6.1.41" evidence="1"/>
<dbReference type="EMBL" id="AE016828">
    <property type="protein sequence ID" value="AAO91476.1"/>
    <property type="molecule type" value="Genomic_DNA"/>
</dbReference>
<dbReference type="RefSeq" id="NP_820962.1">
    <property type="nucleotide sequence ID" value="NC_002971.4"/>
</dbReference>
<dbReference type="RefSeq" id="WP_010958582.1">
    <property type="nucleotide sequence ID" value="NC_002971.4"/>
</dbReference>
<dbReference type="SMR" id="Q83AB7"/>
<dbReference type="STRING" id="227377.CBU_1987"/>
<dbReference type="EnsemblBacteria" id="AAO91476">
    <property type="protein sequence ID" value="AAO91476"/>
    <property type="gene ID" value="CBU_1987"/>
</dbReference>
<dbReference type="GeneID" id="1209900"/>
<dbReference type="KEGG" id="cbu:CBU_1987"/>
<dbReference type="PATRIC" id="fig|227377.7.peg.1974"/>
<dbReference type="eggNOG" id="COG0639">
    <property type="taxonomic scope" value="Bacteria"/>
</dbReference>
<dbReference type="HOGENOM" id="CLU_056184_2_0_6"/>
<dbReference type="OrthoDB" id="9807890at2"/>
<dbReference type="Proteomes" id="UP000002671">
    <property type="component" value="Chromosome"/>
</dbReference>
<dbReference type="GO" id="GO:0005737">
    <property type="term" value="C:cytoplasm"/>
    <property type="evidence" value="ECO:0000318"/>
    <property type="project" value="GO_Central"/>
</dbReference>
<dbReference type="GO" id="GO:0008803">
    <property type="term" value="F:bis(5'-nucleosyl)-tetraphosphatase (symmetrical) activity"/>
    <property type="evidence" value="ECO:0000318"/>
    <property type="project" value="GO_Central"/>
</dbReference>
<dbReference type="GO" id="GO:0016791">
    <property type="term" value="F:phosphatase activity"/>
    <property type="evidence" value="ECO:0000318"/>
    <property type="project" value="GO_Central"/>
</dbReference>
<dbReference type="GO" id="GO:0110154">
    <property type="term" value="P:RNA decapping"/>
    <property type="evidence" value="ECO:0000318"/>
    <property type="project" value="GO_Central"/>
</dbReference>
<dbReference type="CDD" id="cd07422">
    <property type="entry name" value="MPP_ApaH"/>
    <property type="match status" value="1"/>
</dbReference>
<dbReference type="Gene3D" id="3.60.21.10">
    <property type="match status" value="1"/>
</dbReference>
<dbReference type="HAMAP" id="MF_00199">
    <property type="entry name" value="ApaH"/>
    <property type="match status" value="1"/>
</dbReference>
<dbReference type="InterPro" id="IPR004617">
    <property type="entry name" value="ApaH"/>
</dbReference>
<dbReference type="InterPro" id="IPR004843">
    <property type="entry name" value="Calcineurin-like_PHP_ApaH"/>
</dbReference>
<dbReference type="InterPro" id="IPR029052">
    <property type="entry name" value="Metallo-depent_PP-like"/>
</dbReference>
<dbReference type="NCBIfam" id="TIGR00668">
    <property type="entry name" value="apaH"/>
    <property type="match status" value="1"/>
</dbReference>
<dbReference type="NCBIfam" id="NF001204">
    <property type="entry name" value="PRK00166.1"/>
    <property type="match status" value="1"/>
</dbReference>
<dbReference type="PANTHER" id="PTHR40942">
    <property type="match status" value="1"/>
</dbReference>
<dbReference type="PANTHER" id="PTHR40942:SF4">
    <property type="entry name" value="CYTOCHROME C5"/>
    <property type="match status" value="1"/>
</dbReference>
<dbReference type="Pfam" id="PF00149">
    <property type="entry name" value="Metallophos"/>
    <property type="match status" value="1"/>
</dbReference>
<dbReference type="PIRSF" id="PIRSF000903">
    <property type="entry name" value="B5n-ttraPtase_sm"/>
    <property type="match status" value="1"/>
</dbReference>
<dbReference type="SUPFAM" id="SSF56300">
    <property type="entry name" value="Metallo-dependent phosphatases"/>
    <property type="match status" value="1"/>
</dbReference>
<name>APAH_COXBU</name>
<gene>
    <name evidence="1" type="primary">apaH</name>
    <name type="ordered locus">CBU_1987</name>
</gene>
<reference key="1">
    <citation type="journal article" date="2003" name="Proc. Natl. Acad. Sci. U.S.A.">
        <title>Complete genome sequence of the Q-fever pathogen, Coxiella burnetii.</title>
        <authorList>
            <person name="Seshadri R."/>
            <person name="Paulsen I.T."/>
            <person name="Eisen J.A."/>
            <person name="Read T.D."/>
            <person name="Nelson K.E."/>
            <person name="Nelson W.C."/>
            <person name="Ward N.L."/>
            <person name="Tettelin H."/>
            <person name="Davidsen T.M."/>
            <person name="Beanan M.J."/>
            <person name="DeBoy R.T."/>
            <person name="Daugherty S.C."/>
            <person name="Brinkac L.M."/>
            <person name="Madupu R."/>
            <person name="Dodson R.J."/>
            <person name="Khouri H.M."/>
            <person name="Lee K.H."/>
            <person name="Carty H.A."/>
            <person name="Scanlan D."/>
            <person name="Heinzen R.A."/>
            <person name="Thompson H.A."/>
            <person name="Samuel J.E."/>
            <person name="Fraser C.M."/>
            <person name="Heidelberg J.F."/>
        </authorList>
    </citation>
    <scope>NUCLEOTIDE SEQUENCE [LARGE SCALE GENOMIC DNA]</scope>
    <source>
        <strain>RSA 493 / Nine Mile phase I</strain>
    </source>
</reference>
<proteinExistence type="inferred from homology"/>
<evidence type="ECO:0000255" key="1">
    <source>
        <dbReference type="HAMAP-Rule" id="MF_00199"/>
    </source>
</evidence>
<feature type="chain" id="PRO_0000197987" description="Bis(5'-nucleosyl)-tetraphosphatase, symmetrical">
    <location>
        <begin position="1"/>
        <end position="291"/>
    </location>
</feature>
<accession>Q83AB7</accession>
<protein>
    <recommendedName>
        <fullName evidence="1">Bis(5'-nucleosyl)-tetraphosphatase, symmetrical</fullName>
        <ecNumber evidence="1">3.6.1.41</ecNumber>
    </recommendedName>
    <alternativeName>
        <fullName evidence="1">Ap4A hydrolase</fullName>
    </alternativeName>
    <alternativeName>
        <fullName evidence="1">Diadenosine 5',5'''-P1,P4-tetraphosphate pyrophosphohydrolase</fullName>
    </alternativeName>
    <alternativeName>
        <fullName evidence="1">Diadenosine tetraphosphatase</fullName>
    </alternativeName>
</protein>